<proteinExistence type="inferred from homology"/>
<comment type="function">
    <text evidence="1">Digests double-stranded RNA. Involved in the processing of primary rRNA transcript to yield the immediate precursors to the large and small rRNAs (23S and 16S). Processes some mRNAs, and tRNAs when they are encoded in the rRNA operon. Processes pre-crRNA and tracrRNA of type II CRISPR loci if present in the organism.</text>
</comment>
<comment type="catalytic activity">
    <reaction evidence="1">
        <text>Endonucleolytic cleavage to 5'-phosphomonoester.</text>
        <dbReference type="EC" id="3.1.26.3"/>
    </reaction>
</comment>
<comment type="cofactor">
    <cofactor evidence="1">
        <name>Mg(2+)</name>
        <dbReference type="ChEBI" id="CHEBI:18420"/>
    </cofactor>
</comment>
<comment type="subunit">
    <text evidence="1">Homodimer.</text>
</comment>
<comment type="subcellular location">
    <subcellularLocation>
        <location evidence="1">Cytoplasm</location>
    </subcellularLocation>
</comment>
<comment type="similarity">
    <text evidence="1">Belongs to the ribonuclease III family.</text>
</comment>
<accession>Q57E81</accession>
<evidence type="ECO:0000255" key="1">
    <source>
        <dbReference type="HAMAP-Rule" id="MF_00104"/>
    </source>
</evidence>
<sequence length="245" mass="27220">MNRTRPLPEIKMVSANKTASILEERTGHRFLNLKRLERALTHSSVQAPARANYERLEFLGDRVLGLTVAEMLFEAFPEASEGELSVRLNALVNAETCAAIADEIGLADLIHTGSDIKSLNDKRLLNVRADVVEALIATIYLDGGLEAARSFIQRYWKKRSLETGAARRDAKTELQEWAHQQGNVHPVYAILSRSGPDHDPLFLVEVTVKGFAPEKGEGRSKRIAEQSAAEAMLYREGVWKRDGSA</sequence>
<protein>
    <recommendedName>
        <fullName evidence="1">Ribonuclease 3</fullName>
        <ecNumber evidence="1">3.1.26.3</ecNumber>
    </recommendedName>
    <alternativeName>
        <fullName evidence="1">Ribonuclease III</fullName>
        <shortName evidence="1">RNase III</shortName>
    </alternativeName>
</protein>
<name>RNC_BRUAB</name>
<gene>
    <name evidence="1" type="primary">rnc</name>
    <name type="ordered locus">BruAb1_0678</name>
</gene>
<dbReference type="EC" id="3.1.26.3" evidence="1"/>
<dbReference type="EMBL" id="AE017223">
    <property type="protein sequence ID" value="AAX74053.1"/>
    <property type="molecule type" value="Genomic_DNA"/>
</dbReference>
<dbReference type="SMR" id="Q57E81"/>
<dbReference type="EnsemblBacteria" id="AAX74053">
    <property type="protein sequence ID" value="AAX74053"/>
    <property type="gene ID" value="BruAb1_0678"/>
</dbReference>
<dbReference type="KEGG" id="bmb:BruAb1_0678"/>
<dbReference type="HOGENOM" id="CLU_000907_1_1_5"/>
<dbReference type="Proteomes" id="UP000000540">
    <property type="component" value="Chromosome I"/>
</dbReference>
<dbReference type="GO" id="GO:0005737">
    <property type="term" value="C:cytoplasm"/>
    <property type="evidence" value="ECO:0007669"/>
    <property type="project" value="UniProtKB-SubCell"/>
</dbReference>
<dbReference type="GO" id="GO:0003725">
    <property type="term" value="F:double-stranded RNA binding"/>
    <property type="evidence" value="ECO:0007669"/>
    <property type="project" value="TreeGrafter"/>
</dbReference>
<dbReference type="GO" id="GO:0046872">
    <property type="term" value="F:metal ion binding"/>
    <property type="evidence" value="ECO:0007669"/>
    <property type="project" value="UniProtKB-KW"/>
</dbReference>
<dbReference type="GO" id="GO:0004525">
    <property type="term" value="F:ribonuclease III activity"/>
    <property type="evidence" value="ECO:0007669"/>
    <property type="project" value="UniProtKB-UniRule"/>
</dbReference>
<dbReference type="GO" id="GO:0019843">
    <property type="term" value="F:rRNA binding"/>
    <property type="evidence" value="ECO:0007669"/>
    <property type="project" value="UniProtKB-KW"/>
</dbReference>
<dbReference type="GO" id="GO:0006397">
    <property type="term" value="P:mRNA processing"/>
    <property type="evidence" value="ECO:0007669"/>
    <property type="project" value="UniProtKB-UniRule"/>
</dbReference>
<dbReference type="GO" id="GO:0010468">
    <property type="term" value="P:regulation of gene expression"/>
    <property type="evidence" value="ECO:0007669"/>
    <property type="project" value="TreeGrafter"/>
</dbReference>
<dbReference type="GO" id="GO:0006364">
    <property type="term" value="P:rRNA processing"/>
    <property type="evidence" value="ECO:0007669"/>
    <property type="project" value="UniProtKB-UniRule"/>
</dbReference>
<dbReference type="GO" id="GO:0008033">
    <property type="term" value="P:tRNA processing"/>
    <property type="evidence" value="ECO:0007669"/>
    <property type="project" value="UniProtKB-KW"/>
</dbReference>
<dbReference type="CDD" id="cd10845">
    <property type="entry name" value="DSRM_RNAse_III_family"/>
    <property type="match status" value="1"/>
</dbReference>
<dbReference type="CDD" id="cd00593">
    <property type="entry name" value="RIBOc"/>
    <property type="match status" value="1"/>
</dbReference>
<dbReference type="FunFam" id="3.30.160.20:FF:000003">
    <property type="entry name" value="Ribonuclease 3"/>
    <property type="match status" value="1"/>
</dbReference>
<dbReference type="Gene3D" id="3.30.160.20">
    <property type="match status" value="1"/>
</dbReference>
<dbReference type="Gene3D" id="1.10.1520.10">
    <property type="entry name" value="Ribonuclease III domain"/>
    <property type="match status" value="1"/>
</dbReference>
<dbReference type="HAMAP" id="MF_00104">
    <property type="entry name" value="RNase_III"/>
    <property type="match status" value="1"/>
</dbReference>
<dbReference type="InterPro" id="IPR014720">
    <property type="entry name" value="dsRBD_dom"/>
</dbReference>
<dbReference type="InterPro" id="IPR011907">
    <property type="entry name" value="RNase_III"/>
</dbReference>
<dbReference type="InterPro" id="IPR000999">
    <property type="entry name" value="RNase_III_dom"/>
</dbReference>
<dbReference type="InterPro" id="IPR036389">
    <property type="entry name" value="RNase_III_sf"/>
</dbReference>
<dbReference type="NCBIfam" id="TIGR02191">
    <property type="entry name" value="RNaseIII"/>
    <property type="match status" value="1"/>
</dbReference>
<dbReference type="PANTHER" id="PTHR11207:SF0">
    <property type="entry name" value="RIBONUCLEASE 3"/>
    <property type="match status" value="1"/>
</dbReference>
<dbReference type="PANTHER" id="PTHR11207">
    <property type="entry name" value="RIBONUCLEASE III"/>
    <property type="match status" value="1"/>
</dbReference>
<dbReference type="Pfam" id="PF00035">
    <property type="entry name" value="dsrm"/>
    <property type="match status" value="1"/>
</dbReference>
<dbReference type="Pfam" id="PF14622">
    <property type="entry name" value="Ribonucleas_3_3"/>
    <property type="match status" value="1"/>
</dbReference>
<dbReference type="SMART" id="SM00358">
    <property type="entry name" value="DSRM"/>
    <property type="match status" value="1"/>
</dbReference>
<dbReference type="SMART" id="SM00535">
    <property type="entry name" value="RIBOc"/>
    <property type="match status" value="1"/>
</dbReference>
<dbReference type="SUPFAM" id="SSF54768">
    <property type="entry name" value="dsRNA-binding domain-like"/>
    <property type="match status" value="1"/>
</dbReference>
<dbReference type="SUPFAM" id="SSF69065">
    <property type="entry name" value="RNase III domain-like"/>
    <property type="match status" value="1"/>
</dbReference>
<dbReference type="PROSITE" id="PS50137">
    <property type="entry name" value="DS_RBD"/>
    <property type="match status" value="1"/>
</dbReference>
<dbReference type="PROSITE" id="PS00517">
    <property type="entry name" value="RNASE_3_1"/>
    <property type="match status" value="1"/>
</dbReference>
<dbReference type="PROSITE" id="PS50142">
    <property type="entry name" value="RNASE_3_2"/>
    <property type="match status" value="1"/>
</dbReference>
<reference key="1">
    <citation type="journal article" date="2005" name="J. Bacteriol.">
        <title>Completion of the genome sequence of Brucella abortus and comparison to the highly similar genomes of Brucella melitensis and Brucella suis.</title>
        <authorList>
            <person name="Halling S.M."/>
            <person name="Peterson-Burch B.D."/>
            <person name="Bricker B.J."/>
            <person name="Zuerner R.L."/>
            <person name="Qing Z."/>
            <person name="Li L.-L."/>
            <person name="Kapur V."/>
            <person name="Alt D.P."/>
            <person name="Olsen S.C."/>
        </authorList>
    </citation>
    <scope>NUCLEOTIDE SEQUENCE [LARGE SCALE GENOMIC DNA]</scope>
    <source>
        <strain>9-941</strain>
    </source>
</reference>
<keyword id="KW-0963">Cytoplasm</keyword>
<keyword id="KW-0255">Endonuclease</keyword>
<keyword id="KW-0378">Hydrolase</keyword>
<keyword id="KW-0460">Magnesium</keyword>
<keyword id="KW-0479">Metal-binding</keyword>
<keyword id="KW-0507">mRNA processing</keyword>
<keyword id="KW-0540">Nuclease</keyword>
<keyword id="KW-0694">RNA-binding</keyword>
<keyword id="KW-0698">rRNA processing</keyword>
<keyword id="KW-0699">rRNA-binding</keyword>
<keyword id="KW-0819">tRNA processing</keyword>
<feature type="chain" id="PRO_0000228509" description="Ribonuclease 3">
    <location>
        <begin position="1"/>
        <end position="245"/>
    </location>
</feature>
<feature type="domain" description="RNase III" evidence="1">
    <location>
        <begin position="19"/>
        <end position="144"/>
    </location>
</feature>
<feature type="domain" description="DRBM" evidence="1">
    <location>
        <begin position="169"/>
        <end position="238"/>
    </location>
</feature>
<feature type="active site" evidence="1">
    <location>
        <position position="61"/>
    </location>
</feature>
<feature type="active site" evidence="1">
    <location>
        <position position="133"/>
    </location>
</feature>
<feature type="binding site" evidence="1">
    <location>
        <position position="57"/>
    </location>
    <ligand>
        <name>Mg(2+)</name>
        <dbReference type="ChEBI" id="CHEBI:18420"/>
    </ligand>
</feature>
<feature type="binding site" evidence="1">
    <location>
        <position position="130"/>
    </location>
    <ligand>
        <name>Mg(2+)</name>
        <dbReference type="ChEBI" id="CHEBI:18420"/>
    </ligand>
</feature>
<feature type="binding site" evidence="1">
    <location>
        <position position="133"/>
    </location>
    <ligand>
        <name>Mg(2+)</name>
        <dbReference type="ChEBI" id="CHEBI:18420"/>
    </ligand>
</feature>
<organism>
    <name type="scientific">Brucella abortus biovar 1 (strain 9-941)</name>
    <dbReference type="NCBI Taxonomy" id="262698"/>
    <lineage>
        <taxon>Bacteria</taxon>
        <taxon>Pseudomonadati</taxon>
        <taxon>Pseudomonadota</taxon>
        <taxon>Alphaproteobacteria</taxon>
        <taxon>Hyphomicrobiales</taxon>
        <taxon>Brucellaceae</taxon>
        <taxon>Brucella/Ochrobactrum group</taxon>
        <taxon>Brucella</taxon>
    </lineage>
</organism>